<name>TBP_ASFM2</name>
<protein>
    <recommendedName>
        <fullName evidence="1">Putative TATA-binding protein pB263R</fullName>
        <shortName evidence="1">TBP</shortName>
    </recommendedName>
</protein>
<keyword id="KW-0244">Early protein</keyword>
<reference key="1">
    <citation type="submission" date="2003-03" db="EMBL/GenBank/DDBJ databases">
        <title>African swine fever virus genomes.</title>
        <authorList>
            <person name="Kutish G.F."/>
            <person name="Rock D.L."/>
        </authorList>
    </citation>
    <scope>NUCLEOTIDE SEQUENCE [LARGE SCALE GENOMIC DNA]</scope>
</reference>
<feature type="chain" id="PRO_0000373621" description="Putative TATA-binding protein pB263R">
    <location>
        <begin position="1"/>
        <end position="263"/>
    </location>
</feature>
<comment type="function">
    <text evidence="1">Putative TATA-binding protein.</text>
</comment>
<comment type="induction">
    <text evidence="2">Expressed in the early phase of the viral replicative cycle.</text>
</comment>
<comment type="domain">
    <text evidence="1">Possibly contains a TATA-binding domain.</text>
</comment>
<comment type="similarity">
    <text evidence="2">Belongs to the asfivirus B263R family.</text>
</comment>
<organism>
    <name type="scientific">African swine fever virus (isolate Tick/Malawi/Lil 20-1/1983)</name>
    <name type="common">ASFV</name>
    <dbReference type="NCBI Taxonomy" id="10500"/>
    <lineage>
        <taxon>Viruses</taxon>
        <taxon>Varidnaviria</taxon>
        <taxon>Bamfordvirae</taxon>
        <taxon>Nucleocytoviricota</taxon>
        <taxon>Pokkesviricetes</taxon>
        <taxon>Asfuvirales</taxon>
        <taxon>Asfarviridae</taxon>
        <taxon>Asfivirus</taxon>
        <taxon>African swine fever virus</taxon>
    </lineage>
</organism>
<sequence>MEDETELCFRSNKVTRLEMFVCTYGGKISSLACSHMELIKRLQIAEPVKALNCNFGHQCLPGYESLIKTPKKNKNMLRRPRKTEGDGTCFNSAIEASILFKDKMYKLKCFPSTGEIQVPGVIFPDFEDGKNIIQQWVEFLQHQPIEKKVQIIEFKTIMINFKFQINPVSPRVIIHLKKFAALLEQIPTPYPIREIKPPLEDSKVSAKFMVSPGKKVRINVFLKGKINILGCNTKESAETIYTFLKDLISVHWQEILCVLPVPD</sequence>
<evidence type="ECO:0000250" key="1">
    <source>
        <dbReference type="UniProtKB" id="Q65175"/>
    </source>
</evidence>
<evidence type="ECO:0000305" key="2"/>
<organismHost>
    <name type="scientific">Ornithodoros</name>
    <name type="common">relapsing fever ticks</name>
    <dbReference type="NCBI Taxonomy" id="6937"/>
</organismHost>
<organismHost>
    <name type="scientific">Phacochoerus aethiopicus</name>
    <name type="common">Warthog</name>
    <dbReference type="NCBI Taxonomy" id="85517"/>
</organismHost>
<organismHost>
    <name type="scientific">Phacochoerus africanus</name>
    <name type="common">Warthog</name>
    <dbReference type="NCBI Taxonomy" id="41426"/>
</organismHost>
<organismHost>
    <name type="scientific">Potamochoerus larvatus</name>
    <name type="common">Bushpig</name>
    <dbReference type="NCBI Taxonomy" id="273792"/>
</organismHost>
<organismHost>
    <name type="scientific">Sus scrofa</name>
    <name type="common">Pig</name>
    <dbReference type="NCBI Taxonomy" id="9823"/>
</organismHost>
<proteinExistence type="inferred from homology"/>
<accession>P0CAC2</accession>
<dbReference type="EMBL" id="AY261361">
    <property type="status" value="NOT_ANNOTATED_CDS"/>
    <property type="molecule type" value="Genomic_DNA"/>
</dbReference>
<dbReference type="SMR" id="P0CAC2"/>
<dbReference type="Proteomes" id="UP000000860">
    <property type="component" value="Segment"/>
</dbReference>
<gene>
    <name type="ordered locus">Mal-094</name>
</gene>